<accession>Q9D8P7</accession>
<accession>Q8R2T6</accession>
<organism>
    <name type="scientific">Mus musculus</name>
    <name type="common">Mouse</name>
    <dbReference type="NCBI Taxonomy" id="10090"/>
    <lineage>
        <taxon>Eukaryota</taxon>
        <taxon>Metazoa</taxon>
        <taxon>Chordata</taxon>
        <taxon>Craniata</taxon>
        <taxon>Vertebrata</taxon>
        <taxon>Euteleostomi</taxon>
        <taxon>Mammalia</taxon>
        <taxon>Eutheria</taxon>
        <taxon>Euarchontoglires</taxon>
        <taxon>Glires</taxon>
        <taxon>Rodentia</taxon>
        <taxon>Myomorpha</taxon>
        <taxon>Muroidea</taxon>
        <taxon>Muridae</taxon>
        <taxon>Murinae</taxon>
        <taxon>Mus</taxon>
        <taxon>Mus</taxon>
    </lineage>
</organism>
<comment type="function">
    <text evidence="1">Involved in RNA polymerase III-mediated transcription. Integral, tightly associated component of the DNA-binding TFIIIC2 subcomplex that directly binds tRNA and virus-associated RNA promoters (By similarity).</text>
</comment>
<comment type="subunit">
    <text evidence="1">Part of the TFIIIC subcomplex TFIIIC2, consisting of six subunits, GTF3C1, GTF3C2, GTF3C3, GTF3C4, GTF3C5 and GTF3C6. Interacts with GTF3C4 and GTF3C5 (By similarity).</text>
</comment>
<comment type="subcellular location">
    <subcellularLocation>
        <location evidence="1">Nucleus</location>
    </subcellularLocation>
</comment>
<comment type="similarity">
    <text evidence="3">Belongs to the TFIIIC subunit 6 family.</text>
</comment>
<keyword id="KW-0238">DNA-binding</keyword>
<keyword id="KW-0539">Nucleus</keyword>
<keyword id="KW-1185">Reference proteome</keyword>
<keyword id="KW-0804">Transcription</keyword>
<proteinExistence type="evidence at transcript level"/>
<gene>
    <name evidence="5" type="primary">Gtf3c6</name>
</gene>
<reference evidence="6" key="1">
    <citation type="journal article" date="2005" name="Science">
        <title>The transcriptional landscape of the mammalian genome.</title>
        <authorList>
            <person name="Carninci P."/>
            <person name="Kasukawa T."/>
            <person name="Katayama S."/>
            <person name="Gough J."/>
            <person name="Frith M.C."/>
            <person name="Maeda N."/>
            <person name="Oyama R."/>
            <person name="Ravasi T."/>
            <person name="Lenhard B."/>
            <person name="Wells C."/>
            <person name="Kodzius R."/>
            <person name="Shimokawa K."/>
            <person name="Bajic V.B."/>
            <person name="Brenner S.E."/>
            <person name="Batalov S."/>
            <person name="Forrest A.R."/>
            <person name="Zavolan M."/>
            <person name="Davis M.J."/>
            <person name="Wilming L.G."/>
            <person name="Aidinis V."/>
            <person name="Allen J.E."/>
            <person name="Ambesi-Impiombato A."/>
            <person name="Apweiler R."/>
            <person name="Aturaliya R.N."/>
            <person name="Bailey T.L."/>
            <person name="Bansal M."/>
            <person name="Baxter L."/>
            <person name="Beisel K.W."/>
            <person name="Bersano T."/>
            <person name="Bono H."/>
            <person name="Chalk A.M."/>
            <person name="Chiu K.P."/>
            <person name="Choudhary V."/>
            <person name="Christoffels A."/>
            <person name="Clutterbuck D.R."/>
            <person name="Crowe M.L."/>
            <person name="Dalla E."/>
            <person name="Dalrymple B.P."/>
            <person name="de Bono B."/>
            <person name="Della Gatta G."/>
            <person name="di Bernardo D."/>
            <person name="Down T."/>
            <person name="Engstrom P."/>
            <person name="Fagiolini M."/>
            <person name="Faulkner G."/>
            <person name="Fletcher C.F."/>
            <person name="Fukushima T."/>
            <person name="Furuno M."/>
            <person name="Futaki S."/>
            <person name="Gariboldi M."/>
            <person name="Georgii-Hemming P."/>
            <person name="Gingeras T.R."/>
            <person name="Gojobori T."/>
            <person name="Green R.E."/>
            <person name="Gustincich S."/>
            <person name="Harbers M."/>
            <person name="Hayashi Y."/>
            <person name="Hensch T.K."/>
            <person name="Hirokawa N."/>
            <person name="Hill D."/>
            <person name="Huminiecki L."/>
            <person name="Iacono M."/>
            <person name="Ikeo K."/>
            <person name="Iwama A."/>
            <person name="Ishikawa T."/>
            <person name="Jakt M."/>
            <person name="Kanapin A."/>
            <person name="Katoh M."/>
            <person name="Kawasawa Y."/>
            <person name="Kelso J."/>
            <person name="Kitamura H."/>
            <person name="Kitano H."/>
            <person name="Kollias G."/>
            <person name="Krishnan S.P."/>
            <person name="Kruger A."/>
            <person name="Kummerfeld S.K."/>
            <person name="Kurochkin I.V."/>
            <person name="Lareau L.F."/>
            <person name="Lazarevic D."/>
            <person name="Lipovich L."/>
            <person name="Liu J."/>
            <person name="Liuni S."/>
            <person name="McWilliam S."/>
            <person name="Madan Babu M."/>
            <person name="Madera M."/>
            <person name="Marchionni L."/>
            <person name="Matsuda H."/>
            <person name="Matsuzawa S."/>
            <person name="Miki H."/>
            <person name="Mignone F."/>
            <person name="Miyake S."/>
            <person name="Morris K."/>
            <person name="Mottagui-Tabar S."/>
            <person name="Mulder N."/>
            <person name="Nakano N."/>
            <person name="Nakauchi H."/>
            <person name="Ng P."/>
            <person name="Nilsson R."/>
            <person name="Nishiguchi S."/>
            <person name="Nishikawa S."/>
            <person name="Nori F."/>
            <person name="Ohara O."/>
            <person name="Okazaki Y."/>
            <person name="Orlando V."/>
            <person name="Pang K.C."/>
            <person name="Pavan W.J."/>
            <person name="Pavesi G."/>
            <person name="Pesole G."/>
            <person name="Petrovsky N."/>
            <person name="Piazza S."/>
            <person name="Reed J."/>
            <person name="Reid J.F."/>
            <person name="Ring B.Z."/>
            <person name="Ringwald M."/>
            <person name="Rost B."/>
            <person name="Ruan Y."/>
            <person name="Salzberg S.L."/>
            <person name="Sandelin A."/>
            <person name="Schneider C."/>
            <person name="Schoenbach C."/>
            <person name="Sekiguchi K."/>
            <person name="Semple C.A."/>
            <person name="Seno S."/>
            <person name="Sessa L."/>
            <person name="Sheng Y."/>
            <person name="Shibata Y."/>
            <person name="Shimada H."/>
            <person name="Shimada K."/>
            <person name="Silva D."/>
            <person name="Sinclair B."/>
            <person name="Sperling S."/>
            <person name="Stupka E."/>
            <person name="Sugiura K."/>
            <person name="Sultana R."/>
            <person name="Takenaka Y."/>
            <person name="Taki K."/>
            <person name="Tammoja K."/>
            <person name="Tan S.L."/>
            <person name="Tang S."/>
            <person name="Taylor M.S."/>
            <person name="Tegner J."/>
            <person name="Teichmann S.A."/>
            <person name="Ueda H.R."/>
            <person name="van Nimwegen E."/>
            <person name="Verardo R."/>
            <person name="Wei C.L."/>
            <person name="Yagi K."/>
            <person name="Yamanishi H."/>
            <person name="Zabarovsky E."/>
            <person name="Zhu S."/>
            <person name="Zimmer A."/>
            <person name="Hide W."/>
            <person name="Bult C."/>
            <person name="Grimmond S.M."/>
            <person name="Teasdale R.D."/>
            <person name="Liu E.T."/>
            <person name="Brusic V."/>
            <person name="Quackenbush J."/>
            <person name="Wahlestedt C."/>
            <person name="Mattick J.S."/>
            <person name="Hume D.A."/>
            <person name="Kai C."/>
            <person name="Sasaki D."/>
            <person name="Tomaru Y."/>
            <person name="Fukuda S."/>
            <person name="Kanamori-Katayama M."/>
            <person name="Suzuki M."/>
            <person name="Aoki J."/>
            <person name="Arakawa T."/>
            <person name="Iida J."/>
            <person name="Imamura K."/>
            <person name="Itoh M."/>
            <person name="Kato T."/>
            <person name="Kawaji H."/>
            <person name="Kawagashira N."/>
            <person name="Kawashima T."/>
            <person name="Kojima M."/>
            <person name="Kondo S."/>
            <person name="Konno H."/>
            <person name="Nakano K."/>
            <person name="Ninomiya N."/>
            <person name="Nishio T."/>
            <person name="Okada M."/>
            <person name="Plessy C."/>
            <person name="Shibata K."/>
            <person name="Shiraki T."/>
            <person name="Suzuki S."/>
            <person name="Tagami M."/>
            <person name="Waki K."/>
            <person name="Watahiki A."/>
            <person name="Okamura-Oho Y."/>
            <person name="Suzuki H."/>
            <person name="Kawai J."/>
            <person name="Hayashizaki Y."/>
        </authorList>
    </citation>
    <scope>NUCLEOTIDE SEQUENCE [LARGE SCALE MRNA]</scope>
    <source>
        <strain evidence="6">C57BL/6J</strain>
        <strain evidence="8">DBA/2J</strain>
        <tissue evidence="7">Muellerian duct</tissue>
        <tissue evidence="6">Pancreas</tissue>
    </source>
</reference>
<reference evidence="5" key="2">
    <citation type="journal article" date="2004" name="Genome Res.">
        <title>The status, quality, and expansion of the NIH full-length cDNA project: the Mammalian Gene Collection (MGC).</title>
        <authorList>
            <consortium name="The MGC Project Team"/>
        </authorList>
    </citation>
    <scope>NUCLEOTIDE SEQUENCE [LARGE SCALE MRNA]</scope>
    <source>
        <strain evidence="4">Czech II</strain>
        <tissue evidence="5">Brain</tissue>
        <tissue evidence="4">Mammary tumor</tissue>
    </source>
</reference>
<protein>
    <recommendedName>
        <fullName>General transcription factor 3C polypeptide 6</fullName>
    </recommendedName>
    <alternativeName>
        <fullName>Transcription factor IIIC 35 kDa subunit</fullName>
        <shortName>TFIIIC 35 kDa subunit</shortName>
        <shortName>TFIIIC35</shortName>
    </alternativeName>
    <alternativeName>
        <fullName>Transcription factor IIIC subunit 6</fullName>
    </alternativeName>
</protein>
<evidence type="ECO:0000250" key="1">
    <source>
        <dbReference type="UniProtKB" id="Q969F1"/>
    </source>
</evidence>
<evidence type="ECO:0000256" key="2">
    <source>
        <dbReference type="SAM" id="MobiDB-lite"/>
    </source>
</evidence>
<evidence type="ECO:0000305" key="3"/>
<evidence type="ECO:0000312" key="4">
    <source>
        <dbReference type="EMBL" id="AAH27260.1"/>
    </source>
</evidence>
<evidence type="ECO:0000312" key="5">
    <source>
        <dbReference type="EMBL" id="AAH48446.1"/>
    </source>
</evidence>
<evidence type="ECO:0000312" key="6">
    <source>
        <dbReference type="EMBL" id="BAB25281.1"/>
    </source>
</evidence>
<evidence type="ECO:0000312" key="7">
    <source>
        <dbReference type="EMBL" id="BAE36699.1"/>
    </source>
</evidence>
<evidence type="ECO:0000312" key="8">
    <source>
        <dbReference type="EMBL" id="BAE40045.1"/>
    </source>
</evidence>
<feature type="chain" id="PRO_0000314059" description="General transcription factor 3C polypeptide 6">
    <location>
        <begin position="1"/>
        <end position="227"/>
    </location>
</feature>
<feature type="region of interest" description="Disordered" evidence="2">
    <location>
        <begin position="157"/>
        <end position="227"/>
    </location>
</feature>
<feature type="compositionally biased region" description="Basic and acidic residues" evidence="2">
    <location>
        <begin position="186"/>
        <end position="195"/>
    </location>
</feature>
<feature type="compositionally biased region" description="Polar residues" evidence="2">
    <location>
        <begin position="203"/>
        <end position="227"/>
    </location>
</feature>
<dbReference type="EMBL" id="AK007816">
    <property type="protein sequence ID" value="BAB25281.1"/>
    <property type="molecule type" value="mRNA"/>
</dbReference>
<dbReference type="EMBL" id="AK162053">
    <property type="protein sequence ID" value="BAE36699.1"/>
    <property type="molecule type" value="mRNA"/>
</dbReference>
<dbReference type="EMBL" id="AK168070">
    <property type="protein sequence ID" value="BAE40045.1"/>
    <property type="molecule type" value="mRNA"/>
</dbReference>
<dbReference type="EMBL" id="BC027260">
    <property type="protein sequence ID" value="AAH27260.1"/>
    <property type="molecule type" value="mRNA"/>
</dbReference>
<dbReference type="EMBL" id="BC048446">
    <property type="protein sequence ID" value="AAH48446.1"/>
    <property type="molecule type" value="mRNA"/>
</dbReference>
<dbReference type="CCDS" id="CCDS23794.1"/>
<dbReference type="RefSeq" id="NP_080389.2">
    <property type="nucleotide sequence ID" value="NM_026113.4"/>
</dbReference>
<dbReference type="SMR" id="Q9D8P7"/>
<dbReference type="BioGRID" id="212141">
    <property type="interactions" value="8"/>
</dbReference>
<dbReference type="FunCoup" id="Q9D8P7">
    <property type="interactions" value="781"/>
</dbReference>
<dbReference type="IntAct" id="Q9D8P7">
    <property type="interactions" value="5"/>
</dbReference>
<dbReference type="STRING" id="10090.ENSMUSP00000151091"/>
<dbReference type="iPTMnet" id="Q9D8P7"/>
<dbReference type="PhosphoSitePlus" id="Q9D8P7"/>
<dbReference type="PaxDb" id="10090-ENSMUSP00000019982"/>
<dbReference type="PeptideAtlas" id="Q9D8P7"/>
<dbReference type="ProteomicsDB" id="262880"/>
<dbReference type="Antibodypedia" id="54521">
    <property type="antibodies" value="45 antibodies from 13 providers"/>
</dbReference>
<dbReference type="DNASU" id="67371"/>
<dbReference type="Ensembl" id="ENSMUST00000217537.2">
    <property type="protein sequence ID" value="ENSMUSP00000151091.2"/>
    <property type="gene ID" value="ENSMUSG00000019837.9"/>
</dbReference>
<dbReference type="GeneID" id="67371"/>
<dbReference type="KEGG" id="mmu:67371"/>
<dbReference type="UCSC" id="uc007ewr.1">
    <property type="organism name" value="mouse"/>
</dbReference>
<dbReference type="AGR" id="MGI:1914621"/>
<dbReference type="CTD" id="112495"/>
<dbReference type="MGI" id="MGI:1914621">
    <property type="gene designation" value="Gtf3c6"/>
</dbReference>
<dbReference type="VEuPathDB" id="HostDB:ENSMUSG00000019837"/>
<dbReference type="eggNOG" id="ENOG502RYMW">
    <property type="taxonomic scope" value="Eukaryota"/>
</dbReference>
<dbReference type="GeneTree" id="ENSGT00390000000510"/>
<dbReference type="HOGENOM" id="CLU_106995_0_0_1"/>
<dbReference type="InParanoid" id="Q9D8P7"/>
<dbReference type="OMA" id="YKCHTTK"/>
<dbReference type="PhylomeDB" id="Q9D8P7"/>
<dbReference type="TreeFam" id="TF329713"/>
<dbReference type="Reactome" id="R-MMU-76061">
    <property type="pathway name" value="RNA Polymerase III Transcription Initiation From Type 1 Promoter"/>
</dbReference>
<dbReference type="Reactome" id="R-MMU-76066">
    <property type="pathway name" value="RNA Polymerase III Transcription Initiation From Type 2 Promoter"/>
</dbReference>
<dbReference type="BioGRID-ORCS" id="67371">
    <property type="hits" value="14 hits in 78 CRISPR screens"/>
</dbReference>
<dbReference type="ChiTaRS" id="Gtf3c6">
    <property type="organism name" value="mouse"/>
</dbReference>
<dbReference type="PRO" id="PR:Q9D8P7"/>
<dbReference type="Proteomes" id="UP000000589">
    <property type="component" value="Chromosome 10"/>
</dbReference>
<dbReference type="RNAct" id="Q9D8P7">
    <property type="molecule type" value="protein"/>
</dbReference>
<dbReference type="Bgee" id="ENSMUSG00000019837">
    <property type="expression patterns" value="Expressed in dorsal pancreas and 255 other cell types or tissues"/>
</dbReference>
<dbReference type="ExpressionAtlas" id="Q9D8P7">
    <property type="expression patterns" value="baseline and differential"/>
</dbReference>
<dbReference type="GO" id="GO:0005634">
    <property type="term" value="C:nucleus"/>
    <property type="evidence" value="ECO:0007669"/>
    <property type="project" value="UniProtKB-SubCell"/>
</dbReference>
<dbReference type="GO" id="GO:0003677">
    <property type="term" value="F:DNA binding"/>
    <property type="evidence" value="ECO:0007669"/>
    <property type="project" value="UniProtKB-KW"/>
</dbReference>
<dbReference type="GO" id="GO:0006383">
    <property type="term" value="P:transcription by RNA polymerase III"/>
    <property type="evidence" value="ECO:0007669"/>
    <property type="project" value="InterPro"/>
</dbReference>
<dbReference type="FunFam" id="2.60.40.4370:FF:000001">
    <property type="entry name" value="general transcription factor 3C polypeptide 6"/>
    <property type="match status" value="1"/>
</dbReference>
<dbReference type="Gene3D" id="2.60.40.4370">
    <property type="match status" value="1"/>
</dbReference>
<dbReference type="InterPro" id="IPR042771">
    <property type="entry name" value="GTF3C6-like"/>
</dbReference>
<dbReference type="InterPro" id="IPR019481">
    <property type="entry name" value="TFIIIC_triple_barrel"/>
</dbReference>
<dbReference type="PANTHER" id="PTHR21860:SF2">
    <property type="entry name" value="GENERAL TRANSCRIPTION FACTOR 3C POLYPEPTIDE 6"/>
    <property type="match status" value="1"/>
</dbReference>
<dbReference type="PANTHER" id="PTHR21860">
    <property type="entry name" value="TRANSCRIPTION INITIATION FACTOR IIIC TFIIIC , POLYPEPTIDE 6-RELATED"/>
    <property type="match status" value="1"/>
</dbReference>
<dbReference type="Pfam" id="PF10419">
    <property type="entry name" value="TFIIIC_sub6"/>
    <property type="match status" value="1"/>
</dbReference>
<name>TF3C6_MOUSE</name>
<sequence>MASPNAMAAAVDPIWEDLEEEEEELEEEQFVLVELSGIIDSDFLSKCENKCKILGIDTERPIMQVDSYVFAGEYEDTLGTCVIFEEGVERVDPEGTDKTVLKYKCHTMKKLSMTRTLLTEKKEGEENIDGVEWLQMKDNDFSYRPNMICSFLHEHEDEAAGPASDKPVELEDQESQMKGSAEQTQEQEKVEHSEVEDPAPSGETPSEMESSVFMGTQDGNVSQNNQS</sequence>